<protein>
    <recommendedName>
        <fullName evidence="1">Uridylate kinase</fullName>
        <shortName evidence="1">UK</shortName>
        <ecNumber evidence="1">2.7.4.22</ecNumber>
    </recommendedName>
    <alternativeName>
        <fullName evidence="1">Uridine monophosphate kinase</fullName>
        <shortName evidence="1">UMP kinase</shortName>
        <shortName evidence="1">UMPK</shortName>
    </alternativeName>
</protein>
<proteinExistence type="inferred from homology"/>
<accession>Q0APW3</accession>
<keyword id="KW-0067">ATP-binding</keyword>
<keyword id="KW-0963">Cytoplasm</keyword>
<keyword id="KW-0418">Kinase</keyword>
<keyword id="KW-0547">Nucleotide-binding</keyword>
<keyword id="KW-0665">Pyrimidine biosynthesis</keyword>
<keyword id="KW-1185">Reference proteome</keyword>
<keyword id="KW-0808">Transferase</keyword>
<evidence type="ECO:0000255" key="1">
    <source>
        <dbReference type="HAMAP-Rule" id="MF_01220"/>
    </source>
</evidence>
<organism>
    <name type="scientific">Maricaulis maris (strain MCS10)</name>
    <name type="common">Caulobacter maris</name>
    <dbReference type="NCBI Taxonomy" id="394221"/>
    <lineage>
        <taxon>Bacteria</taxon>
        <taxon>Pseudomonadati</taxon>
        <taxon>Pseudomonadota</taxon>
        <taxon>Alphaproteobacteria</taxon>
        <taxon>Maricaulales</taxon>
        <taxon>Maricaulaceae</taxon>
        <taxon>Maricaulis</taxon>
    </lineage>
</organism>
<feature type="chain" id="PRO_0000323880" description="Uridylate kinase">
    <location>
        <begin position="1"/>
        <end position="263"/>
    </location>
</feature>
<feature type="binding site" evidence="1">
    <location>
        <begin position="29"/>
        <end position="32"/>
    </location>
    <ligand>
        <name>ATP</name>
        <dbReference type="ChEBI" id="CHEBI:30616"/>
    </ligand>
</feature>
<feature type="binding site" evidence="1">
    <location>
        <position position="71"/>
    </location>
    <ligand>
        <name>UMP</name>
        <dbReference type="ChEBI" id="CHEBI:57865"/>
    </ligand>
</feature>
<feature type="binding site" evidence="1">
    <location>
        <position position="72"/>
    </location>
    <ligand>
        <name>ATP</name>
        <dbReference type="ChEBI" id="CHEBI:30616"/>
    </ligand>
</feature>
<feature type="binding site" evidence="1">
    <location>
        <position position="76"/>
    </location>
    <ligand>
        <name>ATP</name>
        <dbReference type="ChEBI" id="CHEBI:30616"/>
    </ligand>
</feature>
<feature type="binding site" evidence="1">
    <location>
        <position position="91"/>
    </location>
    <ligand>
        <name>UMP</name>
        <dbReference type="ChEBI" id="CHEBI:57865"/>
    </ligand>
</feature>
<feature type="binding site" evidence="1">
    <location>
        <begin position="152"/>
        <end position="159"/>
    </location>
    <ligand>
        <name>UMP</name>
        <dbReference type="ChEBI" id="CHEBI:57865"/>
    </ligand>
</feature>
<feature type="binding site" evidence="1">
    <location>
        <position position="179"/>
    </location>
    <ligand>
        <name>ATP</name>
        <dbReference type="ChEBI" id="CHEBI:30616"/>
    </ligand>
</feature>
<feature type="binding site" evidence="1">
    <location>
        <position position="180"/>
    </location>
    <ligand>
        <name>ATP</name>
        <dbReference type="ChEBI" id="CHEBI:30616"/>
    </ligand>
</feature>
<feature type="binding site" evidence="1">
    <location>
        <position position="185"/>
    </location>
    <ligand>
        <name>ATP</name>
        <dbReference type="ChEBI" id="CHEBI:30616"/>
    </ligand>
</feature>
<feature type="binding site" evidence="1">
    <location>
        <position position="188"/>
    </location>
    <ligand>
        <name>ATP</name>
        <dbReference type="ChEBI" id="CHEBI:30616"/>
    </ligand>
</feature>
<name>PYRH_MARMM</name>
<gene>
    <name evidence="1" type="primary">pyrH</name>
    <name type="ordered locus">Mmar10_1382</name>
</gene>
<reference key="1">
    <citation type="submission" date="2006-08" db="EMBL/GenBank/DDBJ databases">
        <title>Complete sequence of Maricaulis maris MCS10.</title>
        <authorList>
            <consortium name="US DOE Joint Genome Institute"/>
            <person name="Copeland A."/>
            <person name="Lucas S."/>
            <person name="Lapidus A."/>
            <person name="Barry K."/>
            <person name="Detter J.C."/>
            <person name="Glavina del Rio T."/>
            <person name="Hammon N."/>
            <person name="Israni S."/>
            <person name="Dalin E."/>
            <person name="Tice H."/>
            <person name="Pitluck S."/>
            <person name="Saunders E."/>
            <person name="Brettin T."/>
            <person name="Bruce D."/>
            <person name="Han C."/>
            <person name="Tapia R."/>
            <person name="Gilna P."/>
            <person name="Schmutz J."/>
            <person name="Larimer F."/>
            <person name="Land M."/>
            <person name="Hauser L."/>
            <person name="Kyrpides N."/>
            <person name="Mikhailova N."/>
            <person name="Viollier P."/>
            <person name="Stephens C."/>
            <person name="Richardson P."/>
        </authorList>
    </citation>
    <scope>NUCLEOTIDE SEQUENCE [LARGE SCALE GENOMIC DNA]</scope>
    <source>
        <strain>MCS10</strain>
    </source>
</reference>
<dbReference type="EC" id="2.7.4.22" evidence="1"/>
<dbReference type="EMBL" id="CP000449">
    <property type="protein sequence ID" value="ABI65674.1"/>
    <property type="molecule type" value="Genomic_DNA"/>
</dbReference>
<dbReference type="SMR" id="Q0APW3"/>
<dbReference type="STRING" id="394221.Mmar10_1382"/>
<dbReference type="KEGG" id="mmr:Mmar10_1382"/>
<dbReference type="eggNOG" id="COG0528">
    <property type="taxonomic scope" value="Bacteria"/>
</dbReference>
<dbReference type="HOGENOM" id="CLU_033861_0_0_5"/>
<dbReference type="OrthoDB" id="9807458at2"/>
<dbReference type="UniPathway" id="UPA00159">
    <property type="reaction ID" value="UER00275"/>
</dbReference>
<dbReference type="Proteomes" id="UP000001964">
    <property type="component" value="Chromosome"/>
</dbReference>
<dbReference type="GO" id="GO:0005829">
    <property type="term" value="C:cytosol"/>
    <property type="evidence" value="ECO:0007669"/>
    <property type="project" value="TreeGrafter"/>
</dbReference>
<dbReference type="GO" id="GO:0005524">
    <property type="term" value="F:ATP binding"/>
    <property type="evidence" value="ECO:0007669"/>
    <property type="project" value="UniProtKB-KW"/>
</dbReference>
<dbReference type="GO" id="GO:0033862">
    <property type="term" value="F:UMP kinase activity"/>
    <property type="evidence" value="ECO:0007669"/>
    <property type="project" value="UniProtKB-EC"/>
</dbReference>
<dbReference type="GO" id="GO:0044210">
    <property type="term" value="P:'de novo' CTP biosynthetic process"/>
    <property type="evidence" value="ECO:0007669"/>
    <property type="project" value="UniProtKB-UniRule"/>
</dbReference>
<dbReference type="GO" id="GO:0006225">
    <property type="term" value="P:UDP biosynthetic process"/>
    <property type="evidence" value="ECO:0007669"/>
    <property type="project" value="TreeGrafter"/>
</dbReference>
<dbReference type="CDD" id="cd04254">
    <property type="entry name" value="AAK_UMPK-PyrH-Ec"/>
    <property type="match status" value="1"/>
</dbReference>
<dbReference type="FunFam" id="3.40.1160.10:FF:000001">
    <property type="entry name" value="Uridylate kinase"/>
    <property type="match status" value="1"/>
</dbReference>
<dbReference type="Gene3D" id="3.40.1160.10">
    <property type="entry name" value="Acetylglutamate kinase-like"/>
    <property type="match status" value="1"/>
</dbReference>
<dbReference type="HAMAP" id="MF_01220_B">
    <property type="entry name" value="PyrH_B"/>
    <property type="match status" value="1"/>
</dbReference>
<dbReference type="InterPro" id="IPR036393">
    <property type="entry name" value="AceGlu_kinase-like_sf"/>
</dbReference>
<dbReference type="InterPro" id="IPR001048">
    <property type="entry name" value="Asp/Glu/Uridylate_kinase"/>
</dbReference>
<dbReference type="InterPro" id="IPR011817">
    <property type="entry name" value="Uridylate_kinase"/>
</dbReference>
<dbReference type="InterPro" id="IPR015963">
    <property type="entry name" value="Uridylate_kinase_bac"/>
</dbReference>
<dbReference type="NCBIfam" id="TIGR02075">
    <property type="entry name" value="pyrH_bact"/>
    <property type="match status" value="1"/>
</dbReference>
<dbReference type="PANTHER" id="PTHR42833">
    <property type="entry name" value="URIDYLATE KINASE"/>
    <property type="match status" value="1"/>
</dbReference>
<dbReference type="PANTHER" id="PTHR42833:SF4">
    <property type="entry name" value="URIDYLATE KINASE PUMPKIN, CHLOROPLASTIC"/>
    <property type="match status" value="1"/>
</dbReference>
<dbReference type="Pfam" id="PF00696">
    <property type="entry name" value="AA_kinase"/>
    <property type="match status" value="1"/>
</dbReference>
<dbReference type="PIRSF" id="PIRSF005650">
    <property type="entry name" value="Uridylate_kin"/>
    <property type="match status" value="1"/>
</dbReference>
<dbReference type="SUPFAM" id="SSF53633">
    <property type="entry name" value="Carbamate kinase-like"/>
    <property type="match status" value="1"/>
</dbReference>
<sequence length="263" mass="27877">MLHAVTDSSASGPADGQAGAPKFRRVLLKVSGEALMGSQNYGIDIDTADRIAREVAAAVKGGTEMCLVIGGGNIFRGLSGAAKGMDRAAADYMGMLATVMNALAMQTALERIGVQTRVQSAIPMTTVCEPYIRRRATRHMEKGRVVIFAAGTGNPFFTTDTAAALRAAEMGCDALLKGTQVDGVYSDDPRTNPDAERFDQLDYLDVLTRDLRVMDASAVTLMRENAIPIVVFDIHKTNGLARVLAGEGKCTMIGKMKSDAAAV</sequence>
<comment type="function">
    <text evidence="1">Catalyzes the reversible phosphorylation of UMP to UDP.</text>
</comment>
<comment type="catalytic activity">
    <reaction evidence="1">
        <text>UMP + ATP = UDP + ADP</text>
        <dbReference type="Rhea" id="RHEA:24400"/>
        <dbReference type="ChEBI" id="CHEBI:30616"/>
        <dbReference type="ChEBI" id="CHEBI:57865"/>
        <dbReference type="ChEBI" id="CHEBI:58223"/>
        <dbReference type="ChEBI" id="CHEBI:456216"/>
        <dbReference type="EC" id="2.7.4.22"/>
    </reaction>
</comment>
<comment type="activity regulation">
    <text evidence="1">Inhibited by UTP.</text>
</comment>
<comment type="pathway">
    <text evidence="1">Pyrimidine metabolism; CTP biosynthesis via de novo pathway; UDP from UMP (UMPK route): step 1/1.</text>
</comment>
<comment type="subunit">
    <text evidence="1">Homohexamer.</text>
</comment>
<comment type="subcellular location">
    <subcellularLocation>
        <location evidence="1">Cytoplasm</location>
    </subcellularLocation>
</comment>
<comment type="similarity">
    <text evidence="1">Belongs to the UMP kinase family.</text>
</comment>